<protein>
    <recommendedName>
        <fullName evidence="1">Large ribosomal subunit protein bL36</fullName>
    </recommendedName>
    <alternativeName>
        <fullName evidence="2">50S ribosomal protein L36</fullName>
    </alternativeName>
</protein>
<gene>
    <name evidence="1" type="primary">rpmJ</name>
    <name type="ordered locus">A1I_03245</name>
</gene>
<organism>
    <name type="scientific">Rickettsia bellii (strain OSU 85-389)</name>
    <dbReference type="NCBI Taxonomy" id="391896"/>
    <lineage>
        <taxon>Bacteria</taxon>
        <taxon>Pseudomonadati</taxon>
        <taxon>Pseudomonadota</taxon>
        <taxon>Alphaproteobacteria</taxon>
        <taxon>Rickettsiales</taxon>
        <taxon>Rickettsiaceae</taxon>
        <taxon>Rickettsieae</taxon>
        <taxon>Rickettsia</taxon>
        <taxon>belli group</taxon>
    </lineage>
</organism>
<proteinExistence type="inferred from homology"/>
<sequence>MKVVSSLKSLKKRDKDCQIVKRRGKIFVINKKNKRFKAKQG</sequence>
<reference key="1">
    <citation type="submission" date="2007-09" db="EMBL/GenBank/DDBJ databases">
        <title>Complete genome sequencing of Rickettsia bellii.</title>
        <authorList>
            <person name="Madan A."/>
            <person name="Lee H."/>
            <person name="Madan A."/>
            <person name="Yoon J.-G."/>
            <person name="Ryu G.-Y."/>
            <person name="Dasch G."/>
            <person name="Ereemeva M."/>
        </authorList>
    </citation>
    <scope>NUCLEOTIDE SEQUENCE [LARGE SCALE GENOMIC DNA]</scope>
    <source>
        <strain>OSU 85-389</strain>
    </source>
</reference>
<comment type="similarity">
    <text evidence="1">Belongs to the bacterial ribosomal protein bL36 family.</text>
</comment>
<keyword id="KW-0687">Ribonucleoprotein</keyword>
<keyword id="KW-0689">Ribosomal protein</keyword>
<name>RL36_RICB8</name>
<feature type="chain" id="PRO_1000003410" description="Large ribosomal subunit protein bL36">
    <location>
        <begin position="1"/>
        <end position="41"/>
    </location>
</feature>
<evidence type="ECO:0000255" key="1">
    <source>
        <dbReference type="HAMAP-Rule" id="MF_00251"/>
    </source>
</evidence>
<evidence type="ECO:0000305" key="2"/>
<dbReference type="EMBL" id="CP000849">
    <property type="protein sequence ID" value="ABV79010.1"/>
    <property type="molecule type" value="Genomic_DNA"/>
</dbReference>
<dbReference type="SMR" id="A8GVY3"/>
<dbReference type="KEGG" id="rbo:A1I_03245"/>
<dbReference type="HOGENOM" id="CLU_135723_3_2_5"/>
<dbReference type="GO" id="GO:1990904">
    <property type="term" value="C:ribonucleoprotein complex"/>
    <property type="evidence" value="ECO:0007669"/>
    <property type="project" value="UniProtKB-KW"/>
</dbReference>
<dbReference type="GO" id="GO:0005840">
    <property type="term" value="C:ribosome"/>
    <property type="evidence" value="ECO:0007669"/>
    <property type="project" value="UniProtKB-KW"/>
</dbReference>
<dbReference type="GO" id="GO:0003735">
    <property type="term" value="F:structural constituent of ribosome"/>
    <property type="evidence" value="ECO:0007669"/>
    <property type="project" value="InterPro"/>
</dbReference>
<dbReference type="GO" id="GO:0006412">
    <property type="term" value="P:translation"/>
    <property type="evidence" value="ECO:0007669"/>
    <property type="project" value="UniProtKB-UniRule"/>
</dbReference>
<dbReference type="HAMAP" id="MF_00251">
    <property type="entry name" value="Ribosomal_bL36"/>
    <property type="match status" value="1"/>
</dbReference>
<dbReference type="InterPro" id="IPR000473">
    <property type="entry name" value="Ribosomal_bL36"/>
</dbReference>
<dbReference type="InterPro" id="IPR035977">
    <property type="entry name" value="Ribosomal_bL36_sp"/>
</dbReference>
<dbReference type="InterPro" id="IPR047621">
    <property type="entry name" value="Ribosomal_L36_bact"/>
</dbReference>
<dbReference type="NCBIfam" id="NF002021">
    <property type="entry name" value="PRK00831.1"/>
    <property type="match status" value="1"/>
</dbReference>
<dbReference type="PANTHER" id="PTHR47781">
    <property type="entry name" value="50S RIBOSOMAL PROTEIN L36 2"/>
    <property type="match status" value="1"/>
</dbReference>
<dbReference type="PANTHER" id="PTHR47781:SF1">
    <property type="entry name" value="LARGE RIBOSOMAL SUBUNIT PROTEIN BL36B"/>
    <property type="match status" value="1"/>
</dbReference>
<dbReference type="Pfam" id="PF00444">
    <property type="entry name" value="Ribosomal_L36"/>
    <property type="match status" value="1"/>
</dbReference>
<dbReference type="SUPFAM" id="SSF57840">
    <property type="entry name" value="Ribosomal protein L36"/>
    <property type="match status" value="1"/>
</dbReference>
<dbReference type="PROSITE" id="PS00828">
    <property type="entry name" value="RIBOSOMAL_L36"/>
    <property type="match status" value="1"/>
</dbReference>
<accession>A8GVY3</accession>